<evidence type="ECO:0000255" key="1">
    <source>
        <dbReference type="HAMAP-Rule" id="MF_00736"/>
    </source>
</evidence>
<evidence type="ECO:0000305" key="2"/>
<feature type="chain" id="PRO_1000212793" description="Large ribosomal subunit protein uL11">
    <location>
        <begin position="1"/>
        <end position="170"/>
    </location>
</feature>
<name>RL11_SACI7</name>
<keyword id="KW-0687">Ribonucleoprotein</keyword>
<keyword id="KW-0689">Ribosomal protein</keyword>
<keyword id="KW-0694">RNA-binding</keyword>
<keyword id="KW-0699">rRNA-binding</keyword>
<organism>
    <name type="scientific">Saccharolobus islandicus (strain Y.G.57.14 / Yellowstone #1)</name>
    <name type="common">Sulfolobus islandicus</name>
    <dbReference type="NCBI Taxonomy" id="439386"/>
    <lineage>
        <taxon>Archaea</taxon>
        <taxon>Thermoproteota</taxon>
        <taxon>Thermoprotei</taxon>
        <taxon>Sulfolobales</taxon>
        <taxon>Sulfolobaceae</taxon>
        <taxon>Saccharolobus</taxon>
    </lineage>
</organism>
<reference key="1">
    <citation type="journal article" date="2009" name="Proc. Natl. Acad. Sci. U.S.A.">
        <title>Biogeography of the Sulfolobus islandicus pan-genome.</title>
        <authorList>
            <person name="Reno M.L."/>
            <person name="Held N.L."/>
            <person name="Fields C.J."/>
            <person name="Burke P.V."/>
            <person name="Whitaker R.J."/>
        </authorList>
    </citation>
    <scope>NUCLEOTIDE SEQUENCE [LARGE SCALE GENOMIC DNA]</scope>
    <source>
        <strain>Y.G.57.14 / Yellowstone #1</strain>
    </source>
</reference>
<gene>
    <name evidence="1" type="primary">rpl11</name>
    <name type="ordered locus">YG5714_1877</name>
</gene>
<proteinExistence type="inferred from homology"/>
<accession>C3N7D9</accession>
<sequence>MPTKSIKIMVEGGNVKPGPPLAPTLSQLGLNVGEVVKKLNEATSSFKGMSVPVTIEVDSNTKKYEIKVGIPTTTALLLKEAGASEPSGDPAHKKIGNLSLEQVIKIAIMKKPGLTTKSLKAAVKSMLGTAKSIGVTVENKDPKELVKEVEEGKYDDLLAKYENEWNEVKE</sequence>
<dbReference type="EMBL" id="CP001403">
    <property type="protein sequence ID" value="ACP46133.1"/>
    <property type="molecule type" value="Genomic_DNA"/>
</dbReference>
<dbReference type="RefSeq" id="WP_012713968.1">
    <property type="nucleotide sequence ID" value="NC_012622.1"/>
</dbReference>
<dbReference type="SMR" id="C3N7D9"/>
<dbReference type="KEGG" id="siy:YG5714_1877"/>
<dbReference type="HOGENOM" id="CLU_074237_4_0_2"/>
<dbReference type="Proteomes" id="UP000002308">
    <property type="component" value="Chromosome"/>
</dbReference>
<dbReference type="GO" id="GO:0015934">
    <property type="term" value="C:large ribosomal subunit"/>
    <property type="evidence" value="ECO:0007669"/>
    <property type="project" value="TreeGrafter"/>
</dbReference>
<dbReference type="GO" id="GO:0070180">
    <property type="term" value="F:large ribosomal subunit rRNA binding"/>
    <property type="evidence" value="ECO:0007669"/>
    <property type="project" value="UniProtKB-UniRule"/>
</dbReference>
<dbReference type="GO" id="GO:0003735">
    <property type="term" value="F:structural constituent of ribosome"/>
    <property type="evidence" value="ECO:0007669"/>
    <property type="project" value="InterPro"/>
</dbReference>
<dbReference type="GO" id="GO:0006412">
    <property type="term" value="P:translation"/>
    <property type="evidence" value="ECO:0007669"/>
    <property type="project" value="UniProtKB-UniRule"/>
</dbReference>
<dbReference type="CDD" id="cd00349">
    <property type="entry name" value="Ribosomal_L11"/>
    <property type="match status" value="1"/>
</dbReference>
<dbReference type="FunFam" id="1.10.10.250:FF:000006">
    <property type="entry name" value="50S ribosomal protein L11"/>
    <property type="match status" value="1"/>
</dbReference>
<dbReference type="FunFam" id="3.30.1550.10:FF:000007">
    <property type="entry name" value="50S ribosomal protein L11"/>
    <property type="match status" value="1"/>
</dbReference>
<dbReference type="Gene3D" id="1.10.10.250">
    <property type="entry name" value="Ribosomal protein L11, C-terminal domain"/>
    <property type="match status" value="1"/>
</dbReference>
<dbReference type="Gene3D" id="3.30.1550.10">
    <property type="entry name" value="Ribosomal protein L11/L12, N-terminal domain"/>
    <property type="match status" value="1"/>
</dbReference>
<dbReference type="HAMAP" id="MF_00736">
    <property type="entry name" value="Ribosomal_uL11"/>
    <property type="match status" value="1"/>
</dbReference>
<dbReference type="InterPro" id="IPR000911">
    <property type="entry name" value="Ribosomal_uL11"/>
</dbReference>
<dbReference type="InterPro" id="IPR020783">
    <property type="entry name" value="Ribosomal_uL11_C"/>
</dbReference>
<dbReference type="InterPro" id="IPR036769">
    <property type="entry name" value="Ribosomal_uL11_C_sf"/>
</dbReference>
<dbReference type="InterPro" id="IPR020785">
    <property type="entry name" value="Ribosomal_uL11_CS"/>
</dbReference>
<dbReference type="InterPro" id="IPR020784">
    <property type="entry name" value="Ribosomal_uL11_N"/>
</dbReference>
<dbReference type="InterPro" id="IPR036796">
    <property type="entry name" value="Ribosomal_uL11_N_sf"/>
</dbReference>
<dbReference type="NCBIfam" id="NF002232">
    <property type="entry name" value="PRK01143.1"/>
    <property type="match status" value="1"/>
</dbReference>
<dbReference type="PANTHER" id="PTHR11661">
    <property type="entry name" value="60S RIBOSOMAL PROTEIN L12"/>
    <property type="match status" value="1"/>
</dbReference>
<dbReference type="PANTHER" id="PTHR11661:SF1">
    <property type="entry name" value="LARGE RIBOSOMAL SUBUNIT PROTEIN UL11M"/>
    <property type="match status" value="1"/>
</dbReference>
<dbReference type="Pfam" id="PF00298">
    <property type="entry name" value="Ribosomal_L11"/>
    <property type="match status" value="1"/>
</dbReference>
<dbReference type="Pfam" id="PF03946">
    <property type="entry name" value="Ribosomal_L11_N"/>
    <property type="match status" value="1"/>
</dbReference>
<dbReference type="SMART" id="SM00649">
    <property type="entry name" value="RL11"/>
    <property type="match status" value="1"/>
</dbReference>
<dbReference type="SUPFAM" id="SSF54747">
    <property type="entry name" value="Ribosomal L11/L12e N-terminal domain"/>
    <property type="match status" value="1"/>
</dbReference>
<dbReference type="SUPFAM" id="SSF46906">
    <property type="entry name" value="Ribosomal protein L11, C-terminal domain"/>
    <property type="match status" value="1"/>
</dbReference>
<dbReference type="PROSITE" id="PS00359">
    <property type="entry name" value="RIBOSOMAL_L11"/>
    <property type="match status" value="1"/>
</dbReference>
<comment type="function">
    <text evidence="1">Forms part of the ribosomal stalk which helps the ribosome interact with GTP-bound translation factors.</text>
</comment>
<comment type="subunit">
    <text evidence="1">Part of the ribosomal stalk of the 50S ribosomal subunit. Interacts with L10 and the large rRNA to form the base of the stalk. L10 forms an elongated spine to which L12 dimers bind in a sequential fashion forming a multimeric L10(L12)X complex.</text>
</comment>
<comment type="similarity">
    <text evidence="1">Belongs to the universal ribosomal protein uL11 family.</text>
</comment>
<protein>
    <recommendedName>
        <fullName evidence="1">Large ribosomal subunit protein uL11</fullName>
    </recommendedName>
    <alternativeName>
        <fullName evidence="2">50S ribosomal protein L11</fullName>
    </alternativeName>
</protein>